<reference key="1">
    <citation type="submission" date="2008-05" db="EMBL/GenBank/DDBJ databases">
        <title>Complete sequence of Shigella boydii serotype 18 strain BS512.</title>
        <authorList>
            <person name="Rasko D.A."/>
            <person name="Rosovitz M."/>
            <person name="Maurelli A.T."/>
            <person name="Myers G."/>
            <person name="Seshadri R."/>
            <person name="Cer R."/>
            <person name="Jiang L."/>
            <person name="Ravel J."/>
            <person name="Sebastian Y."/>
        </authorList>
    </citation>
    <scope>NUCLEOTIDE SEQUENCE [LARGE SCALE GENOMIC DNA]</scope>
    <source>
        <strain>CDC 3083-94 / BS512</strain>
    </source>
</reference>
<dbReference type="EC" id="2.7.1.71" evidence="1"/>
<dbReference type="EMBL" id="CP001063">
    <property type="protein sequence ID" value="ACD07561.1"/>
    <property type="molecule type" value="Genomic_DNA"/>
</dbReference>
<dbReference type="RefSeq" id="WP_000193385.1">
    <property type="nucleotide sequence ID" value="NC_010658.1"/>
</dbReference>
<dbReference type="SMR" id="B2U3Z0"/>
<dbReference type="STRING" id="344609.SbBS512_E0305"/>
<dbReference type="KEGG" id="sbc:SbBS512_E0305"/>
<dbReference type="HOGENOM" id="CLU_057607_4_3_6"/>
<dbReference type="UniPathway" id="UPA00053">
    <property type="reaction ID" value="UER00088"/>
</dbReference>
<dbReference type="Proteomes" id="UP000001030">
    <property type="component" value="Chromosome"/>
</dbReference>
<dbReference type="GO" id="GO:0005829">
    <property type="term" value="C:cytosol"/>
    <property type="evidence" value="ECO:0007669"/>
    <property type="project" value="TreeGrafter"/>
</dbReference>
<dbReference type="GO" id="GO:0005524">
    <property type="term" value="F:ATP binding"/>
    <property type="evidence" value="ECO:0007669"/>
    <property type="project" value="UniProtKB-UniRule"/>
</dbReference>
<dbReference type="GO" id="GO:0000287">
    <property type="term" value="F:magnesium ion binding"/>
    <property type="evidence" value="ECO:0007669"/>
    <property type="project" value="UniProtKB-UniRule"/>
</dbReference>
<dbReference type="GO" id="GO:0004765">
    <property type="term" value="F:shikimate kinase activity"/>
    <property type="evidence" value="ECO:0007669"/>
    <property type="project" value="UniProtKB-UniRule"/>
</dbReference>
<dbReference type="GO" id="GO:0008652">
    <property type="term" value="P:amino acid biosynthetic process"/>
    <property type="evidence" value="ECO:0007669"/>
    <property type="project" value="UniProtKB-KW"/>
</dbReference>
<dbReference type="GO" id="GO:0009073">
    <property type="term" value="P:aromatic amino acid family biosynthetic process"/>
    <property type="evidence" value="ECO:0007669"/>
    <property type="project" value="UniProtKB-KW"/>
</dbReference>
<dbReference type="GO" id="GO:0009423">
    <property type="term" value="P:chorismate biosynthetic process"/>
    <property type="evidence" value="ECO:0007669"/>
    <property type="project" value="UniProtKB-UniRule"/>
</dbReference>
<dbReference type="CDD" id="cd00464">
    <property type="entry name" value="SK"/>
    <property type="match status" value="1"/>
</dbReference>
<dbReference type="FunFam" id="3.40.50.300:FF:000408">
    <property type="entry name" value="Shikimate kinase 2"/>
    <property type="match status" value="1"/>
</dbReference>
<dbReference type="Gene3D" id="3.40.50.300">
    <property type="entry name" value="P-loop containing nucleotide triphosphate hydrolases"/>
    <property type="match status" value="1"/>
</dbReference>
<dbReference type="HAMAP" id="MF_00109">
    <property type="entry name" value="Shikimate_kinase"/>
    <property type="match status" value="1"/>
</dbReference>
<dbReference type="HAMAP" id="MF_01269">
    <property type="entry name" value="Shikimate_kinase_2"/>
    <property type="match status" value="1"/>
</dbReference>
<dbReference type="InterPro" id="IPR027417">
    <property type="entry name" value="P-loop_NTPase"/>
</dbReference>
<dbReference type="InterPro" id="IPR031322">
    <property type="entry name" value="Shikimate/glucono_kinase"/>
</dbReference>
<dbReference type="InterPro" id="IPR000623">
    <property type="entry name" value="Shikimate_kinase/TSH1"/>
</dbReference>
<dbReference type="InterPro" id="IPR027544">
    <property type="entry name" value="Shikimate_kinase_2"/>
</dbReference>
<dbReference type="InterPro" id="IPR023000">
    <property type="entry name" value="Shikimate_kinase_CS"/>
</dbReference>
<dbReference type="NCBIfam" id="NF002988">
    <property type="entry name" value="PRK03731.1"/>
    <property type="match status" value="1"/>
</dbReference>
<dbReference type="PANTHER" id="PTHR21087">
    <property type="entry name" value="SHIKIMATE KINASE"/>
    <property type="match status" value="1"/>
</dbReference>
<dbReference type="PANTHER" id="PTHR21087:SF21">
    <property type="entry name" value="SHIKIMATE KINASE 2"/>
    <property type="match status" value="1"/>
</dbReference>
<dbReference type="Pfam" id="PF01202">
    <property type="entry name" value="SKI"/>
    <property type="match status" value="1"/>
</dbReference>
<dbReference type="PRINTS" id="PR01100">
    <property type="entry name" value="SHIKIMTKNASE"/>
</dbReference>
<dbReference type="SUPFAM" id="SSF52540">
    <property type="entry name" value="P-loop containing nucleoside triphosphate hydrolases"/>
    <property type="match status" value="1"/>
</dbReference>
<dbReference type="PROSITE" id="PS01128">
    <property type="entry name" value="SHIKIMATE_KINASE"/>
    <property type="match status" value="1"/>
</dbReference>
<proteinExistence type="inferred from homology"/>
<name>AROL_SHIB3</name>
<feature type="chain" id="PRO_1000140145" description="Shikimate kinase 2">
    <location>
        <begin position="1"/>
        <end position="174"/>
    </location>
</feature>
<feature type="region of interest" description="LID domain">
    <location>
        <begin position="112"/>
        <end position="126"/>
    </location>
</feature>
<feature type="binding site" evidence="1">
    <location>
        <begin position="12"/>
        <end position="17"/>
    </location>
    <ligand>
        <name>ATP</name>
        <dbReference type="ChEBI" id="CHEBI:30616"/>
    </ligand>
</feature>
<feature type="binding site" evidence="1">
    <location>
        <position position="16"/>
    </location>
    <ligand>
        <name>Mg(2+)</name>
        <dbReference type="ChEBI" id="CHEBI:18420"/>
    </ligand>
</feature>
<feature type="binding site" evidence="1">
    <location>
        <position position="32"/>
    </location>
    <ligand>
        <name>Mg(2+)</name>
        <dbReference type="ChEBI" id="CHEBI:18420"/>
    </ligand>
</feature>
<feature type="binding site" evidence="1">
    <location>
        <position position="34"/>
    </location>
    <ligand>
        <name>substrate</name>
    </ligand>
</feature>
<feature type="binding site" evidence="1">
    <location>
        <position position="58"/>
    </location>
    <ligand>
        <name>substrate</name>
    </ligand>
</feature>
<feature type="binding site" evidence="1">
    <location>
        <position position="79"/>
    </location>
    <ligand>
        <name>substrate</name>
    </ligand>
</feature>
<feature type="binding site" evidence="1">
    <location>
        <position position="120"/>
    </location>
    <ligand>
        <name>ATP</name>
        <dbReference type="ChEBI" id="CHEBI:30616"/>
    </ligand>
</feature>
<feature type="binding site" evidence="1">
    <location>
        <position position="139"/>
    </location>
    <ligand>
        <name>substrate</name>
    </ligand>
</feature>
<organism>
    <name type="scientific">Shigella boydii serotype 18 (strain CDC 3083-94 / BS512)</name>
    <dbReference type="NCBI Taxonomy" id="344609"/>
    <lineage>
        <taxon>Bacteria</taxon>
        <taxon>Pseudomonadati</taxon>
        <taxon>Pseudomonadota</taxon>
        <taxon>Gammaproteobacteria</taxon>
        <taxon>Enterobacterales</taxon>
        <taxon>Enterobacteriaceae</taxon>
        <taxon>Shigella</taxon>
    </lineage>
</organism>
<comment type="function">
    <text evidence="1">Catalyzes the specific phosphorylation of the 3-hydroxyl group of shikimic acid using ATP as a cosubstrate.</text>
</comment>
<comment type="catalytic activity">
    <reaction evidence="1">
        <text>shikimate + ATP = 3-phosphoshikimate + ADP + H(+)</text>
        <dbReference type="Rhea" id="RHEA:13121"/>
        <dbReference type="ChEBI" id="CHEBI:15378"/>
        <dbReference type="ChEBI" id="CHEBI:30616"/>
        <dbReference type="ChEBI" id="CHEBI:36208"/>
        <dbReference type="ChEBI" id="CHEBI:145989"/>
        <dbReference type="ChEBI" id="CHEBI:456216"/>
        <dbReference type="EC" id="2.7.1.71"/>
    </reaction>
</comment>
<comment type="cofactor">
    <cofactor evidence="1">
        <name>Mg(2+)</name>
        <dbReference type="ChEBI" id="CHEBI:18420"/>
    </cofactor>
    <text evidence="1">Binds 1 Mg(2+) ion per subunit.</text>
</comment>
<comment type="pathway">
    <text evidence="1">Metabolic intermediate biosynthesis; chorismate biosynthesis; chorismate from D-erythrose 4-phosphate and phosphoenolpyruvate: step 5/7.</text>
</comment>
<comment type="subunit">
    <text evidence="1">Monomer.</text>
</comment>
<comment type="subcellular location">
    <subcellularLocation>
        <location evidence="1">Cytoplasm</location>
    </subcellularLocation>
</comment>
<comment type="domain">
    <text evidence="1">The LID domain closes over the active site upon ATP binding.</text>
</comment>
<comment type="similarity">
    <text evidence="1">Belongs to the shikimate kinase family. AroL subfamily.</text>
</comment>
<gene>
    <name evidence="1" type="primary">aroL</name>
    <name type="ordered locus">SbBS512_E0305</name>
</gene>
<protein>
    <recommendedName>
        <fullName evidence="1">Shikimate kinase 2</fullName>
        <shortName evidence="1">SK 2</shortName>
        <ecNumber evidence="1">2.7.1.71</ecNumber>
    </recommendedName>
</protein>
<sequence>MTQPLFLIGPRGCGKTTVGMALADSLNRRFVDTDQWLQSQLNMTVAEIVEREEWAGFRARETAALEAVTAASTVIATGGGIILTEFNRHFMQNNGIVVYLCAPVSVLVNRLQAAPEEDLRPTLTGKPLSEEVQEVLEERDALYREVAHIIIDATNEPSQVISEIRSALAQTINC</sequence>
<evidence type="ECO:0000255" key="1">
    <source>
        <dbReference type="HAMAP-Rule" id="MF_01269"/>
    </source>
</evidence>
<accession>B2U3Z0</accession>
<keyword id="KW-0028">Amino-acid biosynthesis</keyword>
<keyword id="KW-0057">Aromatic amino acid biosynthesis</keyword>
<keyword id="KW-0067">ATP-binding</keyword>
<keyword id="KW-0963">Cytoplasm</keyword>
<keyword id="KW-0418">Kinase</keyword>
<keyword id="KW-0460">Magnesium</keyword>
<keyword id="KW-0479">Metal-binding</keyword>
<keyword id="KW-0547">Nucleotide-binding</keyword>
<keyword id="KW-1185">Reference proteome</keyword>
<keyword id="KW-0808">Transferase</keyword>